<keyword id="KW-0343">GTPase activation</keyword>
<keyword id="KW-0690">Ribosome biogenesis</keyword>
<name>YIHI_VIBC1</name>
<evidence type="ECO:0000255" key="1">
    <source>
        <dbReference type="HAMAP-Rule" id="MF_01058"/>
    </source>
</evidence>
<evidence type="ECO:0000256" key="2">
    <source>
        <dbReference type="SAM" id="MobiDB-lite"/>
    </source>
</evidence>
<protein>
    <recommendedName>
        <fullName evidence="1">Der GTPase-activating protein YihI</fullName>
    </recommendedName>
</protein>
<accession>A7MTV7</accession>
<reference key="1">
    <citation type="submission" date="2007-08" db="EMBL/GenBank/DDBJ databases">
        <authorList>
            <consortium name="The Vibrio harveyi Genome Sequencing Project"/>
            <person name="Bassler B."/>
            <person name="Clifton S.W."/>
            <person name="Fulton L."/>
            <person name="Delehaunty K."/>
            <person name="Fronick C."/>
            <person name="Harrison M."/>
            <person name="Markivic C."/>
            <person name="Fulton R."/>
            <person name="Tin-Wollam A.-M."/>
            <person name="Shah N."/>
            <person name="Pepin K."/>
            <person name="Nash W."/>
            <person name="Thiruvilangam P."/>
            <person name="Bhonagiri V."/>
            <person name="Waters C."/>
            <person name="Tu K.C."/>
            <person name="Irgon J."/>
            <person name="Wilson R.K."/>
        </authorList>
    </citation>
    <scope>NUCLEOTIDE SEQUENCE [LARGE SCALE GENOMIC DNA]</scope>
    <source>
        <strain>ATCC BAA-1116 / BB120</strain>
    </source>
</reference>
<gene>
    <name evidence="1" type="primary">yihI</name>
    <name type="ordered locus">VIBHAR_00579</name>
</gene>
<sequence length="180" mass="20452">MSRKKKSRNPGASGAPEFVVTRNRTESDVEGRLRKRAKKRKGLKTGSRNSDAEEQKRQAAAQKRDPRLGSKKKIPLIVEPVKKQTKQERRLSAEQELEMLENDAQLNVLLDRIEAGENLGTGLQKYVDEKLDRIEKLMDQLGLLEPEEDEDFTAPAVKGSRNDDDLLADFDDINFDDYKG</sequence>
<feature type="chain" id="PRO_1000064434" description="Der GTPase-activating protein YihI">
    <location>
        <begin position="1"/>
        <end position="180"/>
    </location>
</feature>
<feature type="region of interest" description="Disordered" evidence="2">
    <location>
        <begin position="1"/>
        <end position="90"/>
    </location>
</feature>
<feature type="region of interest" description="Disordered" evidence="2">
    <location>
        <begin position="145"/>
        <end position="180"/>
    </location>
</feature>
<feature type="compositionally biased region" description="Basic and acidic residues" evidence="2">
    <location>
        <begin position="23"/>
        <end position="32"/>
    </location>
</feature>
<feature type="compositionally biased region" description="Basic residues" evidence="2">
    <location>
        <begin position="33"/>
        <end position="43"/>
    </location>
</feature>
<feature type="compositionally biased region" description="Basic and acidic residues" evidence="2">
    <location>
        <begin position="50"/>
        <end position="68"/>
    </location>
</feature>
<feature type="compositionally biased region" description="Basic and acidic residues" evidence="2">
    <location>
        <begin position="80"/>
        <end position="90"/>
    </location>
</feature>
<feature type="compositionally biased region" description="Acidic residues" evidence="2">
    <location>
        <begin position="165"/>
        <end position="180"/>
    </location>
</feature>
<organism>
    <name type="scientific">Vibrio campbellii (strain ATCC BAA-1116)</name>
    <dbReference type="NCBI Taxonomy" id="2902295"/>
    <lineage>
        <taxon>Bacteria</taxon>
        <taxon>Pseudomonadati</taxon>
        <taxon>Pseudomonadota</taxon>
        <taxon>Gammaproteobacteria</taxon>
        <taxon>Vibrionales</taxon>
        <taxon>Vibrionaceae</taxon>
        <taxon>Vibrio</taxon>
    </lineage>
</organism>
<proteinExistence type="inferred from homology"/>
<dbReference type="EMBL" id="CP000789">
    <property type="protein sequence ID" value="ABU69581.1"/>
    <property type="molecule type" value="Genomic_DNA"/>
</dbReference>
<dbReference type="RefSeq" id="WP_012126757.1">
    <property type="nucleotide sequence ID" value="NC_009783.1"/>
</dbReference>
<dbReference type="SMR" id="A7MTV7"/>
<dbReference type="KEGG" id="vha:VIBHAR_00579"/>
<dbReference type="PATRIC" id="fig|338187.25.peg.2036"/>
<dbReference type="Proteomes" id="UP000008152">
    <property type="component" value="Chromosome I"/>
</dbReference>
<dbReference type="GO" id="GO:0005096">
    <property type="term" value="F:GTPase activator activity"/>
    <property type="evidence" value="ECO:0007669"/>
    <property type="project" value="UniProtKB-KW"/>
</dbReference>
<dbReference type="GO" id="GO:0042254">
    <property type="term" value="P:ribosome biogenesis"/>
    <property type="evidence" value="ECO:0007669"/>
    <property type="project" value="UniProtKB-KW"/>
</dbReference>
<dbReference type="HAMAP" id="MF_01058">
    <property type="entry name" value="GAP_YihI"/>
    <property type="match status" value="1"/>
</dbReference>
<dbReference type="InterPro" id="IPR007336">
    <property type="entry name" value="YihI"/>
</dbReference>
<dbReference type="NCBIfam" id="NF003560">
    <property type="entry name" value="PRK05244.1-1"/>
    <property type="match status" value="1"/>
</dbReference>
<dbReference type="Pfam" id="PF04220">
    <property type="entry name" value="YihI"/>
    <property type="match status" value="1"/>
</dbReference>
<comment type="function">
    <text evidence="1">A GTPase-activating protein (GAP) that modifies Der/EngA GTPase function. May play a role in ribosome biogenesis.</text>
</comment>
<comment type="subunit">
    <text evidence="1">Interacts with Der.</text>
</comment>
<comment type="similarity">
    <text evidence="1">Belongs to the YihI family.</text>
</comment>